<organism>
    <name type="scientific">Albinaria caerulea</name>
    <name type="common">Land snail</name>
    <dbReference type="NCBI Taxonomy" id="42349"/>
    <lineage>
        <taxon>Eukaryota</taxon>
        <taxon>Metazoa</taxon>
        <taxon>Spiralia</taxon>
        <taxon>Lophotrochozoa</taxon>
        <taxon>Mollusca</taxon>
        <taxon>Gastropoda</taxon>
        <taxon>Heterobranchia</taxon>
        <taxon>Euthyneura</taxon>
        <taxon>Panpulmonata</taxon>
        <taxon>Eupulmonata</taxon>
        <taxon>Stylommatophora</taxon>
        <taxon>Helicina</taxon>
        <taxon>Clausilioidea</taxon>
        <taxon>Clausiliidae</taxon>
        <taxon>Alopiinae</taxon>
        <taxon>Albinaria</taxon>
    </lineage>
</organism>
<reference key="1">
    <citation type="journal article" date="1995" name="Genetics">
        <title>Complete sequence and gene organization of the mitochondrial genome of the land snail Albinaria coerulea.</title>
        <authorList>
            <person name="Hatzoglou E."/>
            <person name="Rodakis G.C."/>
            <person name="Lecanidou R."/>
        </authorList>
    </citation>
    <scope>NUCLEOTIDE SEQUENCE [GENOMIC DNA]</scope>
</reference>
<geneLocation type="mitochondrion"/>
<protein>
    <recommendedName>
        <fullName>NADH-ubiquinone oxidoreductase chain 6</fullName>
        <ecNumber>7.1.1.2</ecNumber>
    </recommendedName>
    <alternativeName>
        <fullName>NADH dehydrogenase subunit 6</fullName>
    </alternativeName>
</protein>
<sequence length="155" mass="17496">MMSLTFMAGLIFPVFMMLKGINPMSLLLALLTLSLCAVLWLGSFMSSWYAYILFIVYIGGILVLFIYVCMISSNYIASQHMYKSLLYAWGAVMLMSLTMETDTFIILGSNMMYTSVNIPMTILIFLSIYLLIVFFAVVNLMVNMTSILMVESSQV</sequence>
<dbReference type="EC" id="7.1.1.2"/>
<dbReference type="EMBL" id="X83390">
    <property type="protein sequence ID" value="CAA58308.1"/>
    <property type="molecule type" value="Genomic_DNA"/>
</dbReference>
<dbReference type="PIR" id="S59155">
    <property type="entry name" value="S59155"/>
</dbReference>
<dbReference type="RefSeq" id="NP_007341.1">
    <property type="nucleotide sequence ID" value="NC_001761.1"/>
</dbReference>
<dbReference type="GeneID" id="808001"/>
<dbReference type="CTD" id="4541"/>
<dbReference type="GO" id="GO:0031966">
    <property type="term" value="C:mitochondrial membrane"/>
    <property type="evidence" value="ECO:0007669"/>
    <property type="project" value="UniProtKB-SubCell"/>
</dbReference>
<dbReference type="GO" id="GO:0008137">
    <property type="term" value="F:NADH dehydrogenase (ubiquinone) activity"/>
    <property type="evidence" value="ECO:0007669"/>
    <property type="project" value="UniProtKB-EC"/>
</dbReference>
<name>NU6M_ALBCA</name>
<comment type="function">
    <text evidence="1">Core subunit of the mitochondrial membrane respiratory chain NADH dehydrogenase (Complex I) that is believed to belong to the minimal assembly required for catalysis. Complex I functions in the transfer of electrons from NADH to the respiratory chain. The immediate electron acceptor for the enzyme is believed to be ubiquinone (By similarity).</text>
</comment>
<comment type="catalytic activity">
    <reaction>
        <text>a ubiquinone + NADH + 5 H(+)(in) = a ubiquinol + NAD(+) + 4 H(+)(out)</text>
        <dbReference type="Rhea" id="RHEA:29091"/>
        <dbReference type="Rhea" id="RHEA-COMP:9565"/>
        <dbReference type="Rhea" id="RHEA-COMP:9566"/>
        <dbReference type="ChEBI" id="CHEBI:15378"/>
        <dbReference type="ChEBI" id="CHEBI:16389"/>
        <dbReference type="ChEBI" id="CHEBI:17976"/>
        <dbReference type="ChEBI" id="CHEBI:57540"/>
        <dbReference type="ChEBI" id="CHEBI:57945"/>
        <dbReference type="EC" id="7.1.1.2"/>
    </reaction>
</comment>
<comment type="subcellular location">
    <subcellularLocation>
        <location evidence="3">Mitochondrion membrane</location>
        <topology evidence="3">Multi-pass membrane protein</topology>
    </subcellularLocation>
</comment>
<comment type="similarity">
    <text evidence="3">Belongs to the complex I subunit 6 family.</text>
</comment>
<accession>P48922</accession>
<proteinExistence type="inferred from homology"/>
<evidence type="ECO:0000250" key="1"/>
<evidence type="ECO:0000255" key="2"/>
<evidence type="ECO:0000305" key="3"/>
<keyword id="KW-0249">Electron transport</keyword>
<keyword id="KW-0472">Membrane</keyword>
<keyword id="KW-0496">Mitochondrion</keyword>
<keyword id="KW-0520">NAD</keyword>
<keyword id="KW-0679">Respiratory chain</keyword>
<keyword id="KW-1278">Translocase</keyword>
<keyword id="KW-0812">Transmembrane</keyword>
<keyword id="KW-1133">Transmembrane helix</keyword>
<keyword id="KW-0813">Transport</keyword>
<keyword id="KW-0830">Ubiquinone</keyword>
<feature type="chain" id="PRO_0000118233" description="NADH-ubiquinone oxidoreductase chain 6">
    <location>
        <begin position="1"/>
        <end position="155"/>
    </location>
</feature>
<feature type="transmembrane region" description="Helical" evidence="2">
    <location>
        <begin position="24"/>
        <end position="44"/>
    </location>
</feature>
<feature type="transmembrane region" description="Helical" evidence="2">
    <location>
        <begin position="51"/>
        <end position="71"/>
    </location>
</feature>
<feature type="transmembrane region" description="Helical" evidence="2">
    <location>
        <begin position="88"/>
        <end position="108"/>
    </location>
</feature>
<feature type="transmembrane region" description="Helical" evidence="2">
    <location>
        <begin position="118"/>
        <end position="138"/>
    </location>
</feature>
<gene>
    <name type="primary">ND6</name>
</gene>